<evidence type="ECO:0000255" key="1">
    <source>
        <dbReference type="HAMAP-Rule" id="MF_04089"/>
    </source>
</evidence>
<evidence type="ECO:0000269" key="2">
    <source>
    </source>
</evidence>
<evidence type="ECO:0000269" key="3">
    <source>
    </source>
</evidence>
<evidence type="ECO:0000269" key="4">
    <source>
    </source>
</evidence>
<evidence type="ECO:0007829" key="5">
    <source>
        <dbReference type="PDB" id="6AUK"/>
    </source>
</evidence>
<evidence type="ECO:0007829" key="6">
    <source>
        <dbReference type="PDB" id="6CY9"/>
    </source>
</evidence>
<evidence type="ECO:0007829" key="7">
    <source>
        <dbReference type="PDB" id="6CYA"/>
    </source>
</evidence>
<evidence type="ECO:0007829" key="8">
    <source>
        <dbReference type="PDB" id="7PKP"/>
    </source>
</evidence>
<comment type="function">
    <text evidence="1 2">Participates in replication and packaging of the viral genome. Plays a crucial role, together with NSP5, in the formation of virus factories (viroplasms), which are large inclusions in the host cytoplasm where replication intermediates are assembled and viral RNA replication takes place. Displays ssRNA binding, NTPase, RNA triphosphatase (RTPase) and ATP-independent helix-unwinding activities. The unwinding activity may prepare and organize plus-strand RNAs for packaging and replication by removing interfering secondary structures. The RTPase activity plays a role in the removal of the gamma-phosphate from the rotavirus RNA minus strands of dsRNA genome segments (PubMed:14699117). Participates in the selective exclusion of host proteins from stress granules (SG) and P bodies (PB). Also participates in the sequestration of these remodeled organelles in viral factories (By similarity).</text>
</comment>
<comment type="cofactor">
    <cofactor evidence="1">
        <name>Mg(2+)</name>
        <dbReference type="ChEBI" id="CHEBI:18420"/>
    </cofactor>
</comment>
<comment type="subunit">
    <text evidence="1 3 4">Homooctamer. Interacts with VP1; this interaction is weak (PubMed:17182692). Interacts with NSP5; this interaction leads to up-regulation of NSP5 phosphorylation and formation of viral factories (PubMed:14993647). Interacts with host DCP1A, DCP1B, DDX6, EDC4 and EIF2S1/eIF2-alpha; these interactions are probably part of the sequestration of some host SGs and PBs proteins in viral factories (By similarity).</text>
</comment>
<comment type="subcellular location">
    <subcellularLocation>
        <location evidence="1">Host cytoplasm</location>
    </subcellularLocation>
    <text evidence="1">Found in spherical cytoplasmic structures, called viral factories, that appear early after infection and are the site of viral replication and packaging.</text>
</comment>
<comment type="similarity">
    <text evidence="1">Belongs to the rotavirus NSP2 family.</text>
</comment>
<organismHost>
    <name type="scientific">Chlorocebus pygerythrus</name>
    <name type="common">Vervet monkey</name>
    <name type="synonym">Cercopithecus pygerythrus</name>
    <dbReference type="NCBI Taxonomy" id="60710"/>
</organismHost>
<reference key="1">
    <citation type="journal article" date="2007" name="Virology">
        <title>Genome heterogeneity of SA11 rotavirus due to reassortment with 'O' agent.</title>
        <authorList>
            <person name="Small C."/>
            <person name="Barro M."/>
            <person name="Brown T.L."/>
            <person name="Patton J.T."/>
        </authorList>
    </citation>
    <scope>NUCLEOTIDE SEQUENCE [GENOMIC RNA]</scope>
</reference>
<reference key="2">
    <citation type="journal article" date="2004" name="J. Biol. Chem.">
        <title>Role of the histidine triad-like motif in nucleotide hydrolysis by the rotavirus RNA-packaging protein NSP2.</title>
        <authorList>
            <person name="Carpio R.V."/>
            <person name="Gonzalez-Nilo F.D."/>
            <person name="Jayaram H."/>
            <person name="Spencer E."/>
            <person name="Prasad B.V.V."/>
            <person name="Patton J.T."/>
            <person name="Taraporewala Z.F."/>
        </authorList>
    </citation>
    <scope>FUNCTION</scope>
    <scope>MUTAGENESIS OF HIS-110; GLU-153; TYR-171; LYS-188; HIS-221; LYS-223; HIS-225 AND ARG-227</scope>
</reference>
<reference key="3">
    <citation type="journal article" date="2004" name="J. Gen. Virol.">
        <title>Characterization of rotavirus NSP2/NSP5 interactions and the dynamics of viroplasm formation.</title>
        <authorList>
            <person name="Eichwald C."/>
            <person name="Rodriguez J.F."/>
            <person name="Burrone O.R."/>
        </authorList>
    </citation>
    <scope>INTERACTION WITH NSP5</scope>
</reference>
<reference key="4">
    <citation type="journal article" date="2007" name="J. Virol.">
        <title>Interaction of rotavirus polymerase VP1 with nonstructural protein NSP5 is stronger than that with NSP2.</title>
        <authorList>
            <person name="Arnoldi F."/>
            <person name="Campagna M."/>
            <person name="Eichwald C."/>
            <person name="Desselberger U."/>
            <person name="Burrone O.R."/>
        </authorList>
    </citation>
    <scope>INTERACTION WITH VP1</scope>
</reference>
<reference key="5">
    <citation type="journal article" date="2006" name="J. Virol.">
        <title>Cryoelectron microscopy structures of rotavirus NSP2-NSP5 and NSP2-RNA complexes: implications for genome replication.</title>
        <authorList>
            <person name="Jiang X."/>
            <person name="Jayaram H."/>
            <person name="Kumar M."/>
            <person name="Ludtke S.J."/>
            <person name="Estes M.K."/>
            <person name="Prasad B.V.V."/>
        </authorList>
    </citation>
    <scope>STRUCTURE BY ELECTRON MICROSCOPY (9.0 ANGSTROMS) IN COMPLEX WITH NSP5 OR RNA</scope>
</reference>
<accession>A2T3P0</accession>
<dbReference type="EC" id="3.6.4.-" evidence="1"/>
<dbReference type="EMBL" id="DQ838615">
    <property type="protein sequence ID" value="ABG75789.1"/>
    <property type="molecule type" value="Genomic_RNA"/>
</dbReference>
<dbReference type="RefSeq" id="YP_002302221.1">
    <property type="nucleotide sequence ID" value="NC_011502.2"/>
</dbReference>
<dbReference type="PDB" id="6AUK">
    <property type="method" value="X-ray"/>
    <property type="resolution" value="2.60 A"/>
    <property type="chains" value="A=1-317"/>
</dbReference>
<dbReference type="PDB" id="6CY9">
    <property type="method" value="X-ray"/>
    <property type="resolution" value="2.62 A"/>
    <property type="chains" value="A=1-317"/>
</dbReference>
<dbReference type="PDB" id="6CYA">
    <property type="method" value="X-ray"/>
    <property type="resolution" value="2.60 A"/>
    <property type="chains" value="A=1-317"/>
</dbReference>
<dbReference type="PDB" id="7PKO">
    <property type="method" value="EM"/>
    <property type="resolution" value="3.90 A"/>
    <property type="chains" value="A/B/C/D/E/F/G/U=1-313"/>
</dbReference>
<dbReference type="PDB" id="7PKP">
    <property type="method" value="EM"/>
    <property type="resolution" value="3.10 A"/>
    <property type="chains" value="A/B/C/D/E/F/G/U=1-313"/>
</dbReference>
<dbReference type="PDBsum" id="6AUK"/>
<dbReference type="PDBsum" id="6CY9"/>
<dbReference type="PDBsum" id="6CYA"/>
<dbReference type="PDBsum" id="7PKO"/>
<dbReference type="PDBsum" id="7PKP"/>
<dbReference type="SMR" id="A2T3P0"/>
<dbReference type="GeneID" id="7011357"/>
<dbReference type="KEGG" id="vg:7011357"/>
<dbReference type="Proteomes" id="UP000001119">
    <property type="component" value="Genome"/>
</dbReference>
<dbReference type="GO" id="GO:0030430">
    <property type="term" value="C:host cell cytoplasm"/>
    <property type="evidence" value="ECO:0007669"/>
    <property type="project" value="UniProtKB-SubCell"/>
</dbReference>
<dbReference type="GO" id="GO:0005524">
    <property type="term" value="F:ATP binding"/>
    <property type="evidence" value="ECO:0007669"/>
    <property type="project" value="UniProtKB-KW"/>
</dbReference>
<dbReference type="GO" id="GO:0046872">
    <property type="term" value="F:metal ion binding"/>
    <property type="evidence" value="ECO:0007669"/>
    <property type="project" value="UniProtKB-UniRule"/>
</dbReference>
<dbReference type="GO" id="GO:0004550">
    <property type="term" value="F:nucleoside diphosphate kinase activity"/>
    <property type="evidence" value="ECO:0007669"/>
    <property type="project" value="InterPro"/>
</dbReference>
<dbReference type="GO" id="GO:0017111">
    <property type="term" value="F:ribonucleoside triphosphate phosphatase activity"/>
    <property type="evidence" value="ECO:0007669"/>
    <property type="project" value="InterPro"/>
</dbReference>
<dbReference type="GO" id="GO:0003723">
    <property type="term" value="F:RNA binding"/>
    <property type="evidence" value="ECO:0007669"/>
    <property type="project" value="UniProtKB-UniRule"/>
</dbReference>
<dbReference type="GO" id="GO:0019079">
    <property type="term" value="P:viral genome replication"/>
    <property type="evidence" value="ECO:0007669"/>
    <property type="project" value="UniProtKB-UniRule"/>
</dbReference>
<dbReference type="Gene3D" id="3.30.428.20">
    <property type="entry name" value="Rotavirus NSP2 fragment, C-terminal domain"/>
    <property type="match status" value="1"/>
</dbReference>
<dbReference type="Gene3D" id="3.90.1400.10">
    <property type="entry name" value="Rotavirus NSP2 fragment, N-terminal domain"/>
    <property type="match status" value="1"/>
</dbReference>
<dbReference type="HAMAP" id="MF_04089">
    <property type="entry name" value="ROTA_NSP2"/>
    <property type="match status" value="1"/>
</dbReference>
<dbReference type="InterPro" id="IPR048306">
    <property type="entry name" value="Rota_NS35_C"/>
</dbReference>
<dbReference type="InterPro" id="IPR048573">
    <property type="entry name" value="Rota_NS35_N"/>
</dbReference>
<dbReference type="InterPro" id="IPR003668">
    <property type="entry name" value="Rotavirus_NSP2"/>
</dbReference>
<dbReference type="InterPro" id="IPR024076">
    <property type="entry name" value="Rotavirus_NSP2_C"/>
</dbReference>
<dbReference type="InterPro" id="IPR024068">
    <property type="entry name" value="Rotavirus_NSP2_N"/>
</dbReference>
<dbReference type="Pfam" id="PF02509">
    <property type="entry name" value="Rota_NS35_C"/>
    <property type="match status" value="1"/>
</dbReference>
<dbReference type="Pfam" id="PF21067">
    <property type="entry name" value="Rota_NS35_N"/>
    <property type="match status" value="1"/>
</dbReference>
<dbReference type="SUPFAM" id="SSF75347">
    <property type="entry name" value="Rotavirus NSP2 fragment, C-terminal domain"/>
    <property type="match status" value="1"/>
</dbReference>
<dbReference type="SUPFAM" id="SSF75574">
    <property type="entry name" value="Rotavirus NSP2 fragment, N-terminal domain"/>
    <property type="match status" value="1"/>
</dbReference>
<name>NSP2_ROTSH</name>
<keyword id="KW-0002">3D-structure</keyword>
<keyword id="KW-0067">ATP-binding</keyword>
<keyword id="KW-1035">Host cytoplasm</keyword>
<keyword id="KW-0945">Host-virus interaction</keyword>
<keyword id="KW-0378">Hydrolase</keyword>
<keyword id="KW-0460">Magnesium</keyword>
<keyword id="KW-0479">Metal-binding</keyword>
<keyword id="KW-0547">Nucleotide-binding</keyword>
<keyword id="KW-1185">Reference proteome</keyword>
<keyword id="KW-0694">RNA-binding</keyword>
<protein>
    <recommendedName>
        <fullName evidence="1">Non-structural protein 2</fullName>
        <shortName evidence="1">NSP2</shortName>
        <ecNumber evidence="1">3.6.4.-</ecNumber>
    </recommendedName>
    <alternativeName>
        <fullName evidence="1">NCVP3</fullName>
    </alternativeName>
    <alternativeName>
        <fullName evidence="1">Non-structural RNA-binding protein 35</fullName>
        <shortName evidence="1">NS35</shortName>
    </alternativeName>
</protein>
<feature type="chain" id="PRO_0000367818" description="Non-structural protein 2">
    <location>
        <begin position="1"/>
        <end position="317"/>
    </location>
</feature>
<feature type="region of interest" description="RNA-binding" evidence="1">
    <location>
        <begin position="205"/>
        <end position="241"/>
    </location>
</feature>
<feature type="active site" description="For NTPase and RTPase activities" evidence="1">
    <location>
        <position position="225"/>
    </location>
</feature>
<feature type="binding site" evidence="1">
    <location>
        <begin position="107"/>
        <end position="109"/>
    </location>
    <ligand>
        <name>ATP</name>
        <dbReference type="ChEBI" id="CHEBI:30616"/>
    </ligand>
</feature>
<feature type="binding site" evidence="1">
    <location>
        <position position="188"/>
    </location>
    <ligand>
        <name>ATP</name>
        <dbReference type="ChEBI" id="CHEBI:30616"/>
    </ligand>
</feature>
<feature type="binding site" evidence="1">
    <location>
        <begin position="221"/>
        <end position="223"/>
    </location>
    <ligand>
        <name>ATP</name>
        <dbReference type="ChEBI" id="CHEBI:30616"/>
    </ligand>
</feature>
<feature type="binding site" evidence="1">
    <location>
        <position position="227"/>
    </location>
    <ligand>
        <name>ATP</name>
        <dbReference type="ChEBI" id="CHEBI:30616"/>
    </ligand>
</feature>
<feature type="mutagenesis site" description="35% loss of NTPase activity." evidence="2">
    <original>H</original>
    <variation>A</variation>
    <location>
        <position position="110"/>
    </location>
</feature>
<feature type="mutagenesis site" description="Almost complete loss of NTPase activity. Unable to induce NSP5 phosphorylation." evidence="2">
    <original>E</original>
    <variation>A</variation>
    <location>
        <position position="153"/>
    </location>
</feature>
<feature type="mutagenesis site" description="Almost complete loss of NTPase activity." evidence="2">
    <original>Y</original>
    <variation>A</variation>
    <location>
        <position position="171"/>
    </location>
</feature>
<feature type="mutagenesis site" description="Almost complete loss of NTPase activity. Unable to induce NSP5 phosphorylation." evidence="2">
    <original>K</original>
    <variation>A</variation>
    <location>
        <position position="188"/>
    </location>
</feature>
<feature type="mutagenesis site" description="Almost complete loss of NTPase activity." evidence="2">
    <original>H</original>
    <variation>A</variation>
    <location>
        <position position="221"/>
    </location>
</feature>
<feature type="mutagenesis site" description="75% loss of NTPase activity." evidence="2">
    <original>K</original>
    <variation>A</variation>
    <location>
        <position position="223"/>
    </location>
</feature>
<feature type="mutagenesis site" description="Almost complete loss of NTPase activity. Unable to induce NSP5 phosphorylation." evidence="2">
    <original>H</original>
    <variation>A</variation>
    <location>
        <position position="225"/>
    </location>
</feature>
<feature type="mutagenesis site" description="Almost complete loss of NTPase activity." evidence="2">
    <original>R</original>
    <variation>A</variation>
    <location>
        <position position="227"/>
    </location>
</feature>
<feature type="helix" evidence="7">
    <location>
        <begin position="4"/>
        <end position="6"/>
    </location>
</feature>
<feature type="strand" evidence="7">
    <location>
        <begin position="8"/>
        <end position="13"/>
    </location>
</feature>
<feature type="strand" evidence="7">
    <location>
        <begin position="16"/>
        <end position="21"/>
    </location>
</feature>
<feature type="helix" evidence="7">
    <location>
        <begin position="24"/>
        <end position="31"/>
    </location>
</feature>
<feature type="helix" evidence="7">
    <location>
        <begin position="37"/>
        <end position="39"/>
    </location>
</feature>
<feature type="strand" evidence="7">
    <location>
        <begin position="44"/>
        <end position="46"/>
    </location>
</feature>
<feature type="turn" evidence="7">
    <location>
        <begin position="47"/>
        <end position="49"/>
    </location>
</feature>
<feature type="strand" evidence="7">
    <location>
        <begin position="50"/>
        <end position="52"/>
    </location>
</feature>
<feature type="helix" evidence="7">
    <location>
        <begin position="55"/>
        <end position="60"/>
    </location>
</feature>
<feature type="strand" evidence="7">
    <location>
        <begin position="66"/>
        <end position="70"/>
    </location>
</feature>
<feature type="helix" evidence="7">
    <location>
        <begin position="75"/>
        <end position="90"/>
    </location>
</feature>
<feature type="helix" evidence="7">
    <location>
        <begin position="95"/>
        <end position="97"/>
    </location>
</feature>
<feature type="helix" evidence="7">
    <location>
        <begin position="98"/>
        <end position="103"/>
    </location>
</feature>
<feature type="helix" evidence="7">
    <location>
        <begin position="108"/>
        <end position="118"/>
    </location>
</feature>
<feature type="helix" evidence="7">
    <location>
        <begin position="124"/>
        <end position="127"/>
    </location>
</feature>
<feature type="helix" evidence="7">
    <location>
        <begin position="129"/>
        <end position="139"/>
    </location>
</feature>
<feature type="helix" evidence="8">
    <location>
        <begin position="149"/>
        <end position="151"/>
    </location>
</feature>
<feature type="strand" evidence="7">
    <location>
        <begin position="156"/>
        <end position="160"/>
    </location>
</feature>
<feature type="strand" evidence="7">
    <location>
        <begin position="162"/>
        <end position="168"/>
    </location>
</feature>
<feature type="helix" evidence="7">
    <location>
        <begin position="171"/>
        <end position="173"/>
    </location>
</feature>
<feature type="strand" evidence="7">
    <location>
        <begin position="175"/>
        <end position="177"/>
    </location>
</feature>
<feature type="strand" evidence="7">
    <location>
        <begin position="186"/>
        <end position="195"/>
    </location>
</feature>
<feature type="helix" evidence="7">
    <location>
        <begin position="199"/>
        <end position="212"/>
    </location>
</feature>
<feature type="turn" evidence="5">
    <location>
        <begin position="213"/>
        <end position="215"/>
    </location>
</feature>
<feature type="strand" evidence="7">
    <location>
        <begin position="216"/>
        <end position="219"/>
    </location>
</feature>
<feature type="strand" evidence="7">
    <location>
        <begin position="222"/>
        <end position="230"/>
    </location>
</feature>
<feature type="helix" evidence="7">
    <location>
        <begin position="231"/>
        <end position="233"/>
    </location>
</feature>
<feature type="helix" evidence="7">
    <location>
        <begin position="234"/>
        <end position="251"/>
    </location>
</feature>
<feature type="turn" evidence="7">
    <location>
        <begin position="262"/>
        <end position="264"/>
    </location>
</feature>
<feature type="helix" evidence="7">
    <location>
        <begin position="267"/>
        <end position="277"/>
    </location>
</feature>
<feature type="helix" evidence="7">
    <location>
        <begin position="282"/>
        <end position="290"/>
    </location>
</feature>
<feature type="strand" evidence="6">
    <location>
        <begin position="300"/>
        <end position="302"/>
    </location>
</feature>
<feature type="helix" evidence="7">
    <location>
        <begin position="303"/>
        <end position="312"/>
    </location>
</feature>
<sequence>MAELACFCYPHLENDSYKFIPFNNLAIKAMLTAKVDKKDMDKFYDSIIYGIAPPPQFKKRYNTNDNSRGMNFETIMFTKVAMLICEALNSLKVTQANVSNVLSRVVSIRHLENLVIRKENPQDILFHSKDLLLKSTLIAIGQSKEIETTITAEGGEIVFQNAAFTMWKLTYLEHQLMPILDQNFIEYKVTLNEDKPISDVHVKELVAELRWQYNKFAVITHGKGHYRIVKYSSVANHADRVYATFKSNVKTGVNNDFNLLDQRIIWQNWYAFTSSMKQGNTLDVCKRLLFQKMKPEKNPFKGLSTDRKMDEVSQVGV</sequence>
<proteinExistence type="evidence at protein level"/>
<organism>
    <name type="scientific">Rotavirus A (isolate RVA/Monkey/South Africa/SA11-H96/1958/G3P5B[2])</name>
    <name type="common">RV-A</name>
    <name type="synonym">Simian Agent 11 (isolate SI/South Africa/H96/58)</name>
    <dbReference type="NCBI Taxonomy" id="450149"/>
    <lineage>
        <taxon>Viruses</taxon>
        <taxon>Riboviria</taxon>
        <taxon>Orthornavirae</taxon>
        <taxon>Duplornaviricota</taxon>
        <taxon>Resentoviricetes</taxon>
        <taxon>Reovirales</taxon>
        <taxon>Sedoreoviridae</taxon>
        <taxon>Rotavirus</taxon>
        <taxon>Rotavirus A</taxon>
    </lineage>
</organism>